<organism>
    <name type="scientific">Dehalococcoides mccartyi (strain ATCC BAA-2100 / JCM 16839 / KCTC 5957 / BAV1)</name>
    <dbReference type="NCBI Taxonomy" id="216389"/>
    <lineage>
        <taxon>Bacteria</taxon>
        <taxon>Bacillati</taxon>
        <taxon>Chloroflexota</taxon>
        <taxon>Dehalococcoidia</taxon>
        <taxon>Dehalococcoidales</taxon>
        <taxon>Dehalococcoidaceae</taxon>
        <taxon>Dehalococcoides</taxon>
    </lineage>
</organism>
<protein>
    <recommendedName>
        <fullName evidence="1">Small ribosomal subunit protein bS20</fullName>
    </recommendedName>
    <alternativeName>
        <fullName evidence="3">30S ribosomal protein S20</fullName>
    </alternativeName>
</protein>
<accession>A5FPB2</accession>
<keyword id="KW-0687">Ribonucleoprotein</keyword>
<keyword id="KW-0689">Ribosomal protein</keyword>
<keyword id="KW-0694">RNA-binding</keyword>
<keyword id="KW-0699">rRNA-binding</keyword>
<comment type="function">
    <text evidence="1">Binds directly to 16S ribosomal RNA.</text>
</comment>
<comment type="similarity">
    <text evidence="1">Belongs to the bacterial ribosomal protein bS20 family.</text>
</comment>
<gene>
    <name evidence="1" type="primary">rpsT</name>
    <name type="ordered locus">DehaBAV1_1383</name>
</gene>
<dbReference type="EMBL" id="CP000688">
    <property type="protein sequence ID" value="ABQ17960.1"/>
    <property type="molecule type" value="Genomic_DNA"/>
</dbReference>
<dbReference type="SMR" id="A5FPB2"/>
<dbReference type="KEGG" id="deb:DehaBAV1_1383"/>
<dbReference type="PATRIC" id="fig|216389.18.peg.1456"/>
<dbReference type="HOGENOM" id="CLU_160655_3_1_0"/>
<dbReference type="GO" id="GO:0005829">
    <property type="term" value="C:cytosol"/>
    <property type="evidence" value="ECO:0007669"/>
    <property type="project" value="TreeGrafter"/>
</dbReference>
<dbReference type="GO" id="GO:0015935">
    <property type="term" value="C:small ribosomal subunit"/>
    <property type="evidence" value="ECO:0007669"/>
    <property type="project" value="TreeGrafter"/>
</dbReference>
<dbReference type="GO" id="GO:0070181">
    <property type="term" value="F:small ribosomal subunit rRNA binding"/>
    <property type="evidence" value="ECO:0007669"/>
    <property type="project" value="TreeGrafter"/>
</dbReference>
<dbReference type="GO" id="GO:0003735">
    <property type="term" value="F:structural constituent of ribosome"/>
    <property type="evidence" value="ECO:0007669"/>
    <property type="project" value="InterPro"/>
</dbReference>
<dbReference type="GO" id="GO:0006412">
    <property type="term" value="P:translation"/>
    <property type="evidence" value="ECO:0007669"/>
    <property type="project" value="UniProtKB-UniRule"/>
</dbReference>
<dbReference type="Gene3D" id="1.20.58.110">
    <property type="entry name" value="Ribosomal protein S20"/>
    <property type="match status" value="1"/>
</dbReference>
<dbReference type="HAMAP" id="MF_00500">
    <property type="entry name" value="Ribosomal_bS20"/>
    <property type="match status" value="1"/>
</dbReference>
<dbReference type="InterPro" id="IPR002583">
    <property type="entry name" value="Ribosomal_bS20"/>
</dbReference>
<dbReference type="InterPro" id="IPR036510">
    <property type="entry name" value="Ribosomal_bS20_sf"/>
</dbReference>
<dbReference type="NCBIfam" id="TIGR00029">
    <property type="entry name" value="S20"/>
    <property type="match status" value="1"/>
</dbReference>
<dbReference type="PANTHER" id="PTHR33398">
    <property type="entry name" value="30S RIBOSOMAL PROTEIN S20"/>
    <property type="match status" value="1"/>
</dbReference>
<dbReference type="PANTHER" id="PTHR33398:SF1">
    <property type="entry name" value="SMALL RIBOSOMAL SUBUNIT PROTEIN BS20C"/>
    <property type="match status" value="1"/>
</dbReference>
<dbReference type="Pfam" id="PF01649">
    <property type="entry name" value="Ribosomal_S20p"/>
    <property type="match status" value="1"/>
</dbReference>
<dbReference type="SUPFAM" id="SSF46992">
    <property type="entry name" value="Ribosomal protein S20"/>
    <property type="match status" value="1"/>
</dbReference>
<name>RS20_DEHMB</name>
<proteinExistence type="inferred from homology"/>
<feature type="chain" id="PRO_1000081426" description="Small ribosomal subunit protein bS20">
    <location>
        <begin position="1"/>
        <end position="88"/>
    </location>
</feature>
<feature type="region of interest" description="Disordered" evidence="2">
    <location>
        <begin position="1"/>
        <end position="29"/>
    </location>
</feature>
<feature type="compositionally biased region" description="Basic and acidic residues" evidence="2">
    <location>
        <begin position="1"/>
        <end position="23"/>
    </location>
</feature>
<sequence length="88" mass="9581">MPNTKSAEKALRVADANRQENRRAKSQVKTSLTKVKKLVDAGSINEAETAAVSAQSNLDKAAEKGIIHPKNAARRKSRLMKKLNQAAK</sequence>
<evidence type="ECO:0000255" key="1">
    <source>
        <dbReference type="HAMAP-Rule" id="MF_00500"/>
    </source>
</evidence>
<evidence type="ECO:0000256" key="2">
    <source>
        <dbReference type="SAM" id="MobiDB-lite"/>
    </source>
</evidence>
<evidence type="ECO:0000305" key="3"/>
<reference key="1">
    <citation type="submission" date="2007-05" db="EMBL/GenBank/DDBJ databases">
        <title>Complete sequence of Dehalococcoides sp. BAV1.</title>
        <authorList>
            <consortium name="US DOE Joint Genome Institute"/>
            <person name="Copeland A."/>
            <person name="Lucas S."/>
            <person name="Lapidus A."/>
            <person name="Barry K."/>
            <person name="Detter J.C."/>
            <person name="Glavina del Rio T."/>
            <person name="Hammon N."/>
            <person name="Israni S."/>
            <person name="Pitluck S."/>
            <person name="Lowry S."/>
            <person name="Clum A."/>
            <person name="Schmutz J."/>
            <person name="Larimer F."/>
            <person name="Land M."/>
            <person name="Hauser L."/>
            <person name="Kyrpides N."/>
            <person name="Kim E."/>
            <person name="Ritalahti K.M."/>
            <person name="Loeffler F."/>
            <person name="Richardson P."/>
        </authorList>
    </citation>
    <scope>NUCLEOTIDE SEQUENCE [LARGE SCALE GENOMIC DNA]</scope>
    <source>
        <strain>ATCC BAA-2100 / JCM 16839 / KCTC 5957 / BAV1</strain>
    </source>
</reference>